<evidence type="ECO:0000255" key="1">
    <source>
        <dbReference type="HAMAP-Rule" id="MF_01178"/>
    </source>
</evidence>
<protein>
    <recommendedName>
        <fullName evidence="1">Sigma factor-binding protein Crl</fullName>
    </recommendedName>
</protein>
<accession>B2K6Q2</accession>
<sequence>MTLTSAHPKSKLMKRFAALGPYLREGQCQNDHFFFDCLAVCINVKLAPEKREFWGWWIELEPSAGRFTYVYQLGLFNKEGNWNAEKISDPEVQDKLESTLRSFHLRLEEMLASIDMKLEPAADFNDQPVKLSA</sequence>
<dbReference type="EMBL" id="CP001048">
    <property type="protein sequence ID" value="ACC87926.1"/>
    <property type="molecule type" value="Genomic_DNA"/>
</dbReference>
<dbReference type="RefSeq" id="WP_002208702.1">
    <property type="nucleotide sequence ID" value="NZ_CP009780.1"/>
</dbReference>
<dbReference type="SMR" id="B2K6Q2"/>
<dbReference type="GeneID" id="57975495"/>
<dbReference type="KEGG" id="ypb:YPTS_0945"/>
<dbReference type="PATRIC" id="fig|502801.10.peg.282"/>
<dbReference type="GO" id="GO:0005737">
    <property type="term" value="C:cytoplasm"/>
    <property type="evidence" value="ECO:0007669"/>
    <property type="project" value="UniProtKB-SubCell"/>
</dbReference>
<dbReference type="GO" id="GO:0045893">
    <property type="term" value="P:positive regulation of DNA-templated transcription"/>
    <property type="evidence" value="ECO:0007669"/>
    <property type="project" value="UniProtKB-UniRule"/>
</dbReference>
<dbReference type="Gene3D" id="3.30.310.230">
    <property type="entry name" value="Sigma factor-binding protein Crl monomer"/>
    <property type="match status" value="1"/>
</dbReference>
<dbReference type="HAMAP" id="MF_01178">
    <property type="entry name" value="Crl"/>
    <property type="match status" value="1"/>
</dbReference>
<dbReference type="InterPro" id="IPR009986">
    <property type="entry name" value="Tscrpt_reg_Crl"/>
</dbReference>
<dbReference type="InterPro" id="IPR038208">
    <property type="entry name" value="Tscrpt_reg_Crl_sf"/>
</dbReference>
<dbReference type="NCBIfam" id="NF008217">
    <property type="entry name" value="PRK10984.1"/>
    <property type="match status" value="1"/>
</dbReference>
<dbReference type="Pfam" id="PF07417">
    <property type="entry name" value="Crl"/>
    <property type="match status" value="1"/>
</dbReference>
<proteinExistence type="inferred from homology"/>
<organism>
    <name type="scientific">Yersinia pseudotuberculosis serotype IB (strain PB1/+)</name>
    <dbReference type="NCBI Taxonomy" id="502801"/>
    <lineage>
        <taxon>Bacteria</taxon>
        <taxon>Pseudomonadati</taxon>
        <taxon>Pseudomonadota</taxon>
        <taxon>Gammaproteobacteria</taxon>
        <taxon>Enterobacterales</taxon>
        <taxon>Yersiniaceae</taxon>
        <taxon>Yersinia</taxon>
    </lineage>
</organism>
<comment type="function">
    <text evidence="1">Binds to the sigma-S subunit of RNA polymerase, activating expression of sigma-S-regulated genes. Stimulates RNA polymerase holoenzyme formation and may bind to several other sigma factors, such as sigma-70 and sigma-32.</text>
</comment>
<comment type="subcellular location">
    <subcellularLocation>
        <location evidence="1">Cytoplasm</location>
    </subcellularLocation>
</comment>
<comment type="similarity">
    <text evidence="1">Belongs to the Crl family.</text>
</comment>
<feature type="chain" id="PRO_1000138152" description="Sigma factor-binding protein Crl">
    <location>
        <begin position="1"/>
        <end position="133"/>
    </location>
</feature>
<feature type="region of interest" description="Essential for activity" evidence="1">
    <location>
        <begin position="99"/>
        <end position="122"/>
    </location>
</feature>
<keyword id="KW-0010">Activator</keyword>
<keyword id="KW-0963">Cytoplasm</keyword>
<keyword id="KW-0804">Transcription</keyword>
<keyword id="KW-0805">Transcription regulation</keyword>
<gene>
    <name evidence="1" type="primary">crl</name>
    <name type="ordered locus">YPTS_0945</name>
</gene>
<name>CRL_YERPB</name>
<reference key="1">
    <citation type="submission" date="2008-04" db="EMBL/GenBank/DDBJ databases">
        <title>Complete sequence of Yersinia pseudotuberculosis PB1/+.</title>
        <authorList>
            <person name="Copeland A."/>
            <person name="Lucas S."/>
            <person name="Lapidus A."/>
            <person name="Glavina del Rio T."/>
            <person name="Dalin E."/>
            <person name="Tice H."/>
            <person name="Bruce D."/>
            <person name="Goodwin L."/>
            <person name="Pitluck S."/>
            <person name="Munk A.C."/>
            <person name="Brettin T."/>
            <person name="Detter J.C."/>
            <person name="Han C."/>
            <person name="Tapia R."/>
            <person name="Schmutz J."/>
            <person name="Larimer F."/>
            <person name="Land M."/>
            <person name="Hauser L."/>
            <person name="Challacombe J.F."/>
            <person name="Green L."/>
            <person name="Lindler L.E."/>
            <person name="Nikolich M.P."/>
            <person name="Richardson P."/>
        </authorList>
    </citation>
    <scope>NUCLEOTIDE SEQUENCE [LARGE SCALE GENOMIC DNA]</scope>
    <source>
        <strain>PB1/+</strain>
    </source>
</reference>